<name>HFB21_TRIA4</name>
<proteinExistence type="evidence at transcript level"/>
<accession>A0A2T3ZKC8</accession>
<dbReference type="EMBL" id="KZ679257">
    <property type="protein sequence ID" value="PTB45256.1"/>
    <property type="molecule type" value="Genomic_DNA"/>
</dbReference>
<dbReference type="STRING" id="1042311.A0A2T3ZKC8"/>
<dbReference type="OrthoDB" id="4500971at2759"/>
<dbReference type="Proteomes" id="UP000240493">
    <property type="component" value="Unassembled WGS sequence"/>
</dbReference>
<dbReference type="GO" id="GO:0005576">
    <property type="term" value="C:extracellular region"/>
    <property type="evidence" value="ECO:0007669"/>
    <property type="project" value="UniProtKB-KW"/>
</dbReference>
<dbReference type="CDD" id="cd23508">
    <property type="entry name" value="hydrophobin_II"/>
    <property type="match status" value="1"/>
</dbReference>
<dbReference type="Gene3D" id="3.20.120.10">
    <property type="entry name" value="Hydrophobin"/>
    <property type="match status" value="1"/>
</dbReference>
<dbReference type="InterPro" id="IPR010636">
    <property type="entry name" value="Cerato-ulmin_hydrophobin"/>
</dbReference>
<dbReference type="InterPro" id="IPR036686">
    <property type="entry name" value="Hydrophobin_sf"/>
</dbReference>
<dbReference type="PANTHER" id="PTHR42341">
    <property type="entry name" value="HYDROPHOBIN"/>
    <property type="match status" value="1"/>
</dbReference>
<dbReference type="PANTHER" id="PTHR42341:SF1">
    <property type="entry name" value="HYDROPHOBIN"/>
    <property type="match status" value="1"/>
</dbReference>
<dbReference type="Pfam" id="PF06766">
    <property type="entry name" value="Hydrophobin_2"/>
    <property type="match status" value="1"/>
</dbReference>
<dbReference type="SUPFAM" id="SSF101751">
    <property type="entry name" value="Hydrophobin II, HfbII"/>
    <property type="match status" value="1"/>
</dbReference>
<gene>
    <name evidence="4" type="primary">HFB2-1</name>
    <name type="ORF">M441DRAFT_54328</name>
</gene>
<comment type="function">
    <text evidence="5">Aerial growth, conidiation, and dispersal of filamentous fungi in the environment rely upon a capability of their secreting small amphipathic proteins called hydrophobins (HPBs) with low sequence identity. Class I can self-assemble into an outermost layer of rodlet bundles on aerial cell surfaces, conferring cellular hydrophobicity that supports fungal growth, development and dispersal; whereas Class II form highly ordered films at water-air interfaces through intermolecular interactions but contribute nothing to the rodlet structure.</text>
</comment>
<comment type="subunit">
    <text evidence="1">Homodimer (By similarity). Homodimers further self-assemble to form highly ordered films at water-air interfaces through intermolecular interactions (By similarity).</text>
</comment>
<comment type="subcellular location">
    <subcellularLocation>
        <location evidence="1">Secreted</location>
    </subcellularLocation>
    <subcellularLocation>
        <location evidence="1">Secreted</location>
        <location evidence="1">Cell wall</location>
    </subcellularLocation>
</comment>
<comment type="induction">
    <text evidence="3">Expression is up-regulated in the presence of root and stem powder of Shanxin poplar and under nitrogen starvation, but not under carbon starvation conditions.</text>
</comment>
<comment type="similarity">
    <text evidence="5">Belongs to the cerato-ulmin hydrophobin family.</text>
</comment>
<organism>
    <name type="scientific">Trichoderma asperellum (strain ATCC 204424 / CBS 433.97 / NBRC 101777)</name>
    <dbReference type="NCBI Taxonomy" id="1042311"/>
    <lineage>
        <taxon>Eukaryota</taxon>
        <taxon>Fungi</taxon>
        <taxon>Dikarya</taxon>
        <taxon>Ascomycota</taxon>
        <taxon>Pezizomycotina</taxon>
        <taxon>Sordariomycetes</taxon>
        <taxon>Hypocreomycetidae</taxon>
        <taxon>Hypocreales</taxon>
        <taxon>Hypocreaceae</taxon>
        <taxon>Trichoderma</taxon>
    </lineage>
</organism>
<evidence type="ECO:0000250" key="1">
    <source>
        <dbReference type="UniProtKB" id="P79073"/>
    </source>
</evidence>
<evidence type="ECO:0000255" key="2"/>
<evidence type="ECO:0000269" key="3">
    <source>
    </source>
</evidence>
<evidence type="ECO:0000303" key="4">
    <source>
    </source>
</evidence>
<evidence type="ECO:0000305" key="5"/>
<sequence length="88" mass="8867">MKFFIATIFATGALAISVCPTGLYSNPQCCGANILGVAALDCHTPRAPILPGALFEAVCSDEGGKEPLCCTIPVAGQDLLCVAPVGTA</sequence>
<reference key="1">
    <citation type="submission" date="2016-07" db="EMBL/GenBank/DDBJ databases">
        <title>Multiple horizontal gene transfer events from other fungi enriched the ability of initially mycotrophic Trichoderma (Ascomycota) to feed on dead plant biomass.</title>
        <authorList>
            <consortium name="DOE Joint Genome Institute"/>
            <person name="Aerts A."/>
            <person name="Atanasova L."/>
            <person name="Chenthamara K."/>
            <person name="Zhang J."/>
            <person name="Grujic M."/>
            <person name="Henrissat B."/>
            <person name="Kuo A."/>
            <person name="Salamov A."/>
            <person name="Lipzen A."/>
            <person name="Labutti K."/>
            <person name="Barry K."/>
            <person name="Miao Y."/>
            <person name="Rahimi M.J."/>
            <person name="Shen Q."/>
            <person name="Grigoriev I.V."/>
            <person name="Kubicek C.P."/>
            <person name="Druzhinina I.S."/>
        </authorList>
    </citation>
    <scope>NUCLEOTIDE SEQUENCE [LARGE SCALE GENOMIC DNA]</scope>
    <source>
        <strain>ATCC 204424 / CBS 433.97 / NBRC 101777</strain>
    </source>
</reference>
<reference key="2">
    <citation type="journal article" date="2015" name="Microbiol. Res.">
        <title>Functional analysis of the class II hydrophobin gene HFB2-6 from the biocontrol agent Trichoderma asperellum ACCC30536.</title>
        <authorList>
            <person name="Huang Y."/>
            <person name="Mijiti G."/>
            <person name="Wang Z."/>
            <person name="Yu W."/>
            <person name="Fan H."/>
            <person name="Zhang R."/>
            <person name="Liu Z."/>
        </authorList>
    </citation>
    <scope>INDUCTION</scope>
</reference>
<protein>
    <recommendedName>
        <fullName evidence="4">Class II hydrophobin 1</fullName>
    </recommendedName>
</protein>
<feature type="signal peptide" evidence="2">
    <location>
        <begin position="1"/>
        <end position="15"/>
    </location>
</feature>
<feature type="chain" id="PRO_5015586771" description="Class II hydrophobin 1">
    <location>
        <begin position="16"/>
        <end position="88"/>
    </location>
</feature>
<feature type="disulfide bond" evidence="1">
    <location>
        <begin position="19"/>
        <end position="69"/>
    </location>
</feature>
<feature type="disulfide bond" evidence="1">
    <location>
        <begin position="29"/>
        <end position="59"/>
    </location>
</feature>
<feature type="disulfide bond" evidence="1">
    <location>
        <begin position="30"/>
        <end position="42"/>
    </location>
</feature>
<feature type="disulfide bond" evidence="1">
    <location>
        <begin position="70"/>
        <end position="81"/>
    </location>
</feature>
<keyword id="KW-0134">Cell wall</keyword>
<keyword id="KW-1015">Disulfide bond</keyword>
<keyword id="KW-1185">Reference proteome</keyword>
<keyword id="KW-0964">Secreted</keyword>
<keyword id="KW-0732">Signal</keyword>